<protein>
    <recommendedName>
        <fullName>NAD(P)H-quinone oxidoreductase subunit 5, chloroplastic</fullName>
        <ecNumber>7.1.1.-</ecNumber>
    </recommendedName>
    <alternativeName>
        <fullName>NAD(P)H dehydrogenase subunit 5</fullName>
    </alternativeName>
    <alternativeName>
        <fullName>NADH-plastoquinone oxidoreductase subunit 5</fullName>
    </alternativeName>
</protein>
<sequence>MEHTYQYAWVIPLLPLPVIMLMGFGLFLIPTATKNLRRIWAFPSILLLSIAMVFSLHLSIQQINGSSIYQYLWSWTINNDFSLEFGYLVDPLTSIMLILITTVGILVLIYSDDYMSHDEGYLRFFVYISFFNTSMLGLVTSSNLIQIYFFWELVGMCSYLLIGFWFTRPIAASACQKAFVTNRVGDFGLLLGILGFFWITGSLEFRDLFKIANNWIPNNGINSLLTTLCAFLLFLGAVAKSAQFPLHVWLPDAMEGPTPISALIHAATMVAAGIFLLARLLPLFISLPLLMSFISLVGTITLFLGATLALAQRDIKRSLAYSTMSQLGYMMLALGIGSYQAALFHLITHAYSKALLFLGSGSVIHSMEPLVGYSPDKSQNMVLMGGLRKYVPITRTTFLCGTLSLCGIPPLACFWSKDEILSNSWLYSPFFGIIASFTAGLTAFYMFRIYLLTFDGYLRVHFQNYSSTKEGSLYSISLWGKSISKGVNRDFVLSTMKSGVSFFSQNIPKIPANTRNKIGSFSTPFGAKKTFVYPHETGNTMLFPLLILLLFTLFIGSIGIPFDNGVKDNRILELTILSKWLTPSINLFQENSNSSINSYEFLTNAISSVSLAIFGLFIAYIFYGSAYSFFQNLNFQNSLVKKNPKKSFLDEVKKKIYSWSYNRGYIDFFYTRVFILGIRRLAELTHFFDKGVIDGIINGVGLAGFCIGEEIKYVGGGRISSYLFFFLCYVSLFLFFIP</sequence>
<geneLocation type="chloroplast"/>
<dbReference type="EC" id="7.1.1.-"/>
<dbReference type="EMBL" id="AE009947">
    <property type="protein sequence ID" value="AAT44650.1"/>
    <property type="status" value="ALT_SEQ"/>
    <property type="molecule type" value="Genomic_DNA"/>
</dbReference>
<dbReference type="SMR" id="Q6L3E3"/>
<dbReference type="GO" id="GO:0009535">
    <property type="term" value="C:chloroplast thylakoid membrane"/>
    <property type="evidence" value="ECO:0007669"/>
    <property type="project" value="UniProtKB-SubCell"/>
</dbReference>
<dbReference type="GO" id="GO:0008137">
    <property type="term" value="F:NADH dehydrogenase (ubiquinone) activity"/>
    <property type="evidence" value="ECO:0007669"/>
    <property type="project" value="InterPro"/>
</dbReference>
<dbReference type="GO" id="GO:0048038">
    <property type="term" value="F:quinone binding"/>
    <property type="evidence" value="ECO:0007669"/>
    <property type="project" value="UniProtKB-KW"/>
</dbReference>
<dbReference type="GO" id="GO:0042773">
    <property type="term" value="P:ATP synthesis coupled electron transport"/>
    <property type="evidence" value="ECO:0007669"/>
    <property type="project" value="InterPro"/>
</dbReference>
<dbReference type="GO" id="GO:0015990">
    <property type="term" value="P:electron transport coupled proton transport"/>
    <property type="evidence" value="ECO:0007669"/>
    <property type="project" value="TreeGrafter"/>
</dbReference>
<dbReference type="Gene3D" id="1.20.5.2700">
    <property type="match status" value="1"/>
</dbReference>
<dbReference type="InterPro" id="IPR002128">
    <property type="entry name" value="NADH_UbQ_OxRdtase_chlpt_su5_C"/>
</dbReference>
<dbReference type="InterPro" id="IPR018393">
    <property type="entry name" value="NADHpl_OxRdtase_5_subgr"/>
</dbReference>
<dbReference type="InterPro" id="IPR001750">
    <property type="entry name" value="ND/Mrp_TM"/>
</dbReference>
<dbReference type="InterPro" id="IPR003945">
    <property type="entry name" value="NU5C-like"/>
</dbReference>
<dbReference type="InterPro" id="IPR001516">
    <property type="entry name" value="Proton_antipo_N"/>
</dbReference>
<dbReference type="NCBIfam" id="TIGR01974">
    <property type="entry name" value="NDH_I_L"/>
    <property type="match status" value="1"/>
</dbReference>
<dbReference type="NCBIfam" id="NF005141">
    <property type="entry name" value="PRK06590.1"/>
    <property type="match status" value="1"/>
</dbReference>
<dbReference type="PANTHER" id="PTHR42829">
    <property type="entry name" value="NADH-UBIQUINONE OXIDOREDUCTASE CHAIN 5"/>
    <property type="match status" value="1"/>
</dbReference>
<dbReference type="PANTHER" id="PTHR42829:SF2">
    <property type="entry name" value="NADH-UBIQUINONE OXIDOREDUCTASE CHAIN 5"/>
    <property type="match status" value="1"/>
</dbReference>
<dbReference type="Pfam" id="PF01010">
    <property type="entry name" value="Proton_antipo_C"/>
    <property type="match status" value="1"/>
</dbReference>
<dbReference type="Pfam" id="PF00361">
    <property type="entry name" value="Proton_antipo_M"/>
    <property type="match status" value="1"/>
</dbReference>
<dbReference type="Pfam" id="PF00662">
    <property type="entry name" value="Proton_antipo_N"/>
    <property type="match status" value="1"/>
</dbReference>
<dbReference type="PRINTS" id="PR01434">
    <property type="entry name" value="NADHDHGNASE5"/>
</dbReference>
<dbReference type="PRINTS" id="PR01435">
    <property type="entry name" value="NPOXDRDTASE5"/>
</dbReference>
<keyword id="KW-0150">Chloroplast</keyword>
<keyword id="KW-0472">Membrane</keyword>
<keyword id="KW-0520">NAD</keyword>
<keyword id="KW-0521">NADP</keyword>
<keyword id="KW-0934">Plastid</keyword>
<keyword id="KW-0618">Plastoquinone</keyword>
<keyword id="KW-0874">Quinone</keyword>
<keyword id="KW-0691">RNA editing</keyword>
<keyword id="KW-0793">Thylakoid</keyword>
<keyword id="KW-1278">Translocase</keyword>
<keyword id="KW-0812">Transmembrane</keyword>
<keyword id="KW-1133">Transmembrane helix</keyword>
<keyword id="KW-0813">Transport</keyword>
<gene>
    <name type="primary">ndhF</name>
    <name type="ordered locus">PS038</name>
</gene>
<accession>Q6L3E3</accession>
<feature type="chain" id="PRO_0000226943" description="NAD(P)H-quinone oxidoreductase subunit 5, chloroplastic">
    <location>
        <begin position="1"/>
        <end position="738"/>
    </location>
</feature>
<feature type="transmembrane region" description="Helical" evidence="2">
    <location>
        <begin position="9"/>
        <end position="29"/>
    </location>
</feature>
<feature type="transmembrane region" description="Helical" evidence="2">
    <location>
        <begin position="39"/>
        <end position="59"/>
    </location>
</feature>
<feature type="transmembrane region" description="Helical" evidence="2">
    <location>
        <begin position="89"/>
        <end position="109"/>
    </location>
</feature>
<feature type="transmembrane region" description="Helical" evidence="2">
    <location>
        <begin position="125"/>
        <end position="145"/>
    </location>
</feature>
<feature type="transmembrane region" description="Helical" evidence="2">
    <location>
        <begin position="147"/>
        <end position="167"/>
    </location>
</feature>
<feature type="transmembrane region" description="Helical" evidence="2">
    <location>
        <begin position="185"/>
        <end position="205"/>
    </location>
</feature>
<feature type="transmembrane region" description="Helical" evidence="2">
    <location>
        <begin position="219"/>
        <end position="239"/>
    </location>
</feature>
<feature type="transmembrane region" description="Helical" evidence="2">
    <location>
        <begin position="258"/>
        <end position="278"/>
    </location>
</feature>
<feature type="transmembrane region" description="Helical" evidence="2">
    <location>
        <begin position="280"/>
        <end position="300"/>
    </location>
</feature>
<feature type="transmembrane region" description="Helical" evidence="2">
    <location>
        <begin position="327"/>
        <end position="347"/>
    </location>
</feature>
<feature type="transmembrane region" description="Helical" evidence="2">
    <location>
        <begin position="354"/>
        <end position="374"/>
    </location>
</feature>
<feature type="transmembrane region" description="Helical" evidence="2">
    <location>
        <begin position="396"/>
        <end position="416"/>
    </location>
</feature>
<feature type="transmembrane region" description="Helical" evidence="2">
    <location>
        <begin position="425"/>
        <end position="445"/>
    </location>
</feature>
<feature type="transmembrane region" description="Helical" evidence="2">
    <location>
        <begin position="542"/>
        <end position="562"/>
    </location>
</feature>
<feature type="transmembrane region" description="Helical" evidence="2">
    <location>
        <begin position="610"/>
        <end position="630"/>
    </location>
</feature>
<feature type="transmembrane region" description="Helical" evidence="2">
    <location>
        <begin position="691"/>
        <end position="711"/>
    </location>
</feature>
<feature type="transmembrane region" description="Helical" evidence="2">
    <location>
        <begin position="717"/>
        <end position="737"/>
    </location>
</feature>
<comment type="function">
    <text evidence="1">NDH shuttles electrons from NAD(P)H:plastoquinone, via FMN and iron-sulfur (Fe-S) centers, to quinones in the photosynthetic chain and possibly in a chloroplast respiratory chain. The immediate electron acceptor for the enzyme in this species is believed to be plastoquinone. Couples the redox reaction to proton translocation, and thus conserves the redox energy in a proton gradient (By similarity).</text>
</comment>
<comment type="catalytic activity">
    <reaction>
        <text>a plastoquinone + NADH + (n+1) H(+)(in) = a plastoquinol + NAD(+) + n H(+)(out)</text>
        <dbReference type="Rhea" id="RHEA:42608"/>
        <dbReference type="Rhea" id="RHEA-COMP:9561"/>
        <dbReference type="Rhea" id="RHEA-COMP:9562"/>
        <dbReference type="ChEBI" id="CHEBI:15378"/>
        <dbReference type="ChEBI" id="CHEBI:17757"/>
        <dbReference type="ChEBI" id="CHEBI:57540"/>
        <dbReference type="ChEBI" id="CHEBI:57945"/>
        <dbReference type="ChEBI" id="CHEBI:62192"/>
    </reaction>
</comment>
<comment type="catalytic activity">
    <reaction>
        <text>a plastoquinone + NADPH + (n+1) H(+)(in) = a plastoquinol + NADP(+) + n H(+)(out)</text>
        <dbReference type="Rhea" id="RHEA:42612"/>
        <dbReference type="Rhea" id="RHEA-COMP:9561"/>
        <dbReference type="Rhea" id="RHEA-COMP:9562"/>
        <dbReference type="ChEBI" id="CHEBI:15378"/>
        <dbReference type="ChEBI" id="CHEBI:17757"/>
        <dbReference type="ChEBI" id="CHEBI:57783"/>
        <dbReference type="ChEBI" id="CHEBI:58349"/>
        <dbReference type="ChEBI" id="CHEBI:62192"/>
    </reaction>
</comment>
<comment type="subunit">
    <text evidence="1">NDH is composed of at least 16 different subunits, 5 of which are encoded in the nucleus.</text>
</comment>
<comment type="subcellular location">
    <subcellularLocation>
        <location evidence="1">Plastid</location>
        <location evidence="1">Chloroplast thylakoid membrane</location>
        <topology evidence="1">Multi-pass membrane protein</topology>
    </subcellularLocation>
</comment>
<comment type="RNA editing">
    <location>
        <position position="21" evidence="3"/>
    </location>
</comment>
<comment type="similarity">
    <text evidence="4">Belongs to the complex I subunit 5 family.</text>
</comment>
<evidence type="ECO:0000250" key="1"/>
<evidence type="ECO:0000255" key="2"/>
<evidence type="ECO:0000269" key="3">
    <source>
    </source>
</evidence>
<evidence type="ECO:0000305" key="4"/>
<proteinExistence type="evidence at transcript level"/>
<organism>
    <name type="scientific">Saccharum hybrid</name>
    <name type="common">Sugarcane</name>
    <dbReference type="NCBI Taxonomy" id="15819"/>
    <lineage>
        <taxon>Eukaryota</taxon>
        <taxon>Viridiplantae</taxon>
        <taxon>Streptophyta</taxon>
        <taxon>Embryophyta</taxon>
        <taxon>Tracheophyta</taxon>
        <taxon>Spermatophyta</taxon>
        <taxon>Magnoliopsida</taxon>
        <taxon>Liliopsida</taxon>
        <taxon>Poales</taxon>
        <taxon>Poaceae</taxon>
        <taxon>PACMAD clade</taxon>
        <taxon>Panicoideae</taxon>
        <taxon>Andropogonodae</taxon>
        <taxon>Andropogoneae</taxon>
        <taxon>Saccharinae</taxon>
        <taxon>Saccharum</taxon>
    </lineage>
</organism>
<name>NU5C_SACHY</name>
<reference key="1">
    <citation type="journal article" date="2004" name="Curr. Genet.">
        <title>Structural features and transcript-editing analysis of sugarcane (Saccharum officinarum L.) chloroplast genome.</title>
        <authorList>
            <person name="Calsa T. Jr."/>
            <person name="Carraro D.M."/>
            <person name="Benatti M.R."/>
            <person name="Barbosa A.C."/>
            <person name="Kitajima J.P."/>
            <person name="Carrer H."/>
        </authorList>
    </citation>
    <scope>NUCLEOTIDE SEQUENCE [LARGE SCALE GENOMIC DNA]</scope>
    <scope>RNA EDITING</scope>
    <source>
        <strain>cv. SP-80-3280</strain>
    </source>
</reference>